<gene>
    <name evidence="1" type="primary">glnE</name>
    <name type="ordered locus">AZOSEA05180</name>
    <name type="ORF">ebA977</name>
</gene>
<reference key="1">
    <citation type="journal article" date="2005" name="Arch. Microbiol.">
        <title>The genome sequence of an anaerobic aromatic-degrading denitrifying bacterium, strain EbN1.</title>
        <authorList>
            <person name="Rabus R."/>
            <person name="Kube M."/>
            <person name="Heider J."/>
            <person name="Beck A."/>
            <person name="Heitmann K."/>
            <person name="Widdel F."/>
            <person name="Reinhardt R."/>
        </authorList>
    </citation>
    <scope>NUCLEOTIDE SEQUENCE [LARGE SCALE GENOMIC DNA]</scope>
    <source>
        <strain>DSM 19018 / LMG 30748 / EbN1</strain>
    </source>
</reference>
<comment type="function">
    <text evidence="1">Involved in the regulation of glutamine synthetase GlnA, a key enzyme in the process to assimilate ammonia. When cellular nitrogen levels are high, the C-terminal adenylyl transferase (AT) inactivates GlnA by covalent transfer of an adenylyl group from ATP to specific tyrosine residue of GlnA, thus reducing its activity. Conversely, when nitrogen levels are low, the N-terminal adenylyl removase (AR) activates GlnA by removing the adenylyl group by phosphorolysis, increasing its activity. The regulatory region of GlnE binds the signal transduction protein PII (GlnB) which indicates the nitrogen status of the cell.</text>
</comment>
<comment type="catalytic activity">
    <reaction evidence="1">
        <text>[glutamine synthetase]-O(4)-(5'-adenylyl)-L-tyrosine + phosphate = [glutamine synthetase]-L-tyrosine + ADP</text>
        <dbReference type="Rhea" id="RHEA:43716"/>
        <dbReference type="Rhea" id="RHEA-COMP:10660"/>
        <dbReference type="Rhea" id="RHEA-COMP:10661"/>
        <dbReference type="ChEBI" id="CHEBI:43474"/>
        <dbReference type="ChEBI" id="CHEBI:46858"/>
        <dbReference type="ChEBI" id="CHEBI:83624"/>
        <dbReference type="ChEBI" id="CHEBI:456216"/>
        <dbReference type="EC" id="2.7.7.89"/>
    </reaction>
</comment>
<comment type="catalytic activity">
    <reaction evidence="1">
        <text>[glutamine synthetase]-L-tyrosine + ATP = [glutamine synthetase]-O(4)-(5'-adenylyl)-L-tyrosine + diphosphate</text>
        <dbReference type="Rhea" id="RHEA:18589"/>
        <dbReference type="Rhea" id="RHEA-COMP:10660"/>
        <dbReference type="Rhea" id="RHEA-COMP:10661"/>
        <dbReference type="ChEBI" id="CHEBI:30616"/>
        <dbReference type="ChEBI" id="CHEBI:33019"/>
        <dbReference type="ChEBI" id="CHEBI:46858"/>
        <dbReference type="ChEBI" id="CHEBI:83624"/>
        <dbReference type="EC" id="2.7.7.42"/>
    </reaction>
</comment>
<comment type="cofactor">
    <cofactor evidence="1">
        <name>Mg(2+)</name>
        <dbReference type="ChEBI" id="CHEBI:18420"/>
    </cofactor>
</comment>
<comment type="similarity">
    <text evidence="1">Belongs to the GlnE family.</text>
</comment>
<protein>
    <recommendedName>
        <fullName evidence="1">Bifunctional glutamine synthetase adenylyltransferase/adenylyl-removing enzyme</fullName>
    </recommendedName>
    <alternativeName>
        <fullName evidence="1">ATP:glutamine synthetase adenylyltransferase</fullName>
    </alternativeName>
    <alternativeName>
        <fullName evidence="1">ATase</fullName>
    </alternativeName>
    <domain>
        <recommendedName>
            <fullName evidence="1">Glutamine synthetase adenylyl-L-tyrosine phosphorylase</fullName>
            <ecNumber evidence="1">2.7.7.89</ecNumber>
        </recommendedName>
        <alternativeName>
            <fullName evidence="1">Adenylyl removase</fullName>
            <shortName evidence="1">AR</shortName>
            <shortName evidence="1">AT-N</shortName>
        </alternativeName>
    </domain>
    <domain>
        <recommendedName>
            <fullName evidence="1">Glutamine synthetase adenylyl transferase</fullName>
            <ecNumber evidence="1">2.7.7.42</ecNumber>
        </recommendedName>
        <alternativeName>
            <fullName evidence="1">Adenylyl transferase</fullName>
            <shortName evidence="1">AT</shortName>
            <shortName evidence="1">AT-C</shortName>
        </alternativeName>
    </domain>
</protein>
<sequence length="938" mass="105278">MLEADAARLKTDRLGYNPLHVLRADAATRRQEPAILTMIRSSPPMSVDSSPLPEALRHAASISRFMRRMLDSRPWLAAQLAGSLGQPLDSEAMSSFLANRGVDEARLRASLRHLRSWVVCHVLTRDLNGFADLAEVTETMTVLAEVTVRATYEVLREGLVARYGAPLSPTGWEQELLVIGMGKLGGRELNVSSDIDLIFVYPEDGDTGGNKVISNFEFFERLGKQMIQALADVTEHGQVFRVDMRLRPNGDSGPLVCSFDMLENYFITQGREWERYAWIKARVLAGERYHELEQIARPFVFRKYLDFGSINAMRALHAQIRREVTRRDRVNNIKLGPGGIREIEFTAQVFQLIRGGREPGLQVRATLDVLAVLGERGILTPQTVGELAEAYDFLRRLEHRLQYLDDAQTHDLPGNDEDCECIARAMDFPDYTSFLGVLDHHRAAVSRHFDHVFGDPSEEAHTLDSMWAAARDVEQAEPILSRLGYGDPSGAAHRLAALHGSARYQQLPNHIRSRLDALMPRVVEVAAATPGPDETLARCIDLIEAISRRGAYLALLQQYPQALRRVADLVGASRWAAQYLTRHPILLDELLDDRNLEPAPDWDALRAQMRDTLDTLEPDMERQMDVMREQHHAQVFRLLTQDIAGLLTVEKLADHLSALADLMLELALPLVWRKIKIRHRDDPAFAVIAYGKLGGKELGYASDLDIVFLFDDPAPEALEVYTRLAQRINTWLSSQTAAGILFETDLRLRPNGESGLLVTSIESFRKYQLESAWVWEHQALTRARFAAGDATIGAAFERIRCEVLRLPRDIAALRAEVLAMRRKMSDAHAGKSERFNLKHDAGGLVDVEFLIQYLVLGHAHRYPELTGNLGNIALLRIAGELGLIPAELAARCGDSYRLFRRLQHRQRLNGLLSLVAPDEVAAAREPVRALWTIVFGSA</sequence>
<evidence type="ECO:0000255" key="1">
    <source>
        <dbReference type="HAMAP-Rule" id="MF_00802"/>
    </source>
</evidence>
<name>GLNE_AROAE</name>
<dbReference type="EC" id="2.7.7.89" evidence="1"/>
<dbReference type="EC" id="2.7.7.42" evidence="1"/>
<dbReference type="EMBL" id="CR555306">
    <property type="protein sequence ID" value="CAI06640.1"/>
    <property type="molecule type" value="Genomic_DNA"/>
</dbReference>
<dbReference type="SMR" id="Q5P7S1"/>
<dbReference type="STRING" id="76114.ebA977"/>
<dbReference type="KEGG" id="eba:ebA977"/>
<dbReference type="eggNOG" id="COG1391">
    <property type="taxonomic scope" value="Bacteria"/>
</dbReference>
<dbReference type="HOGENOM" id="CLU_006233_0_1_4"/>
<dbReference type="Proteomes" id="UP000006552">
    <property type="component" value="Chromosome"/>
</dbReference>
<dbReference type="GO" id="GO:0005829">
    <property type="term" value="C:cytosol"/>
    <property type="evidence" value="ECO:0007669"/>
    <property type="project" value="TreeGrafter"/>
</dbReference>
<dbReference type="GO" id="GO:0008882">
    <property type="term" value="F:[glutamate-ammonia-ligase] adenylyltransferase activity"/>
    <property type="evidence" value="ECO:0007669"/>
    <property type="project" value="UniProtKB-UniRule"/>
</dbReference>
<dbReference type="GO" id="GO:0047388">
    <property type="term" value="F:[glutamine synthetase]-adenylyl-L-tyrosine phosphorylase activity"/>
    <property type="evidence" value="ECO:0007669"/>
    <property type="project" value="UniProtKB-EC"/>
</dbReference>
<dbReference type="GO" id="GO:0005524">
    <property type="term" value="F:ATP binding"/>
    <property type="evidence" value="ECO:0007669"/>
    <property type="project" value="UniProtKB-UniRule"/>
</dbReference>
<dbReference type="GO" id="GO:0000287">
    <property type="term" value="F:magnesium ion binding"/>
    <property type="evidence" value="ECO:0007669"/>
    <property type="project" value="UniProtKB-UniRule"/>
</dbReference>
<dbReference type="GO" id="GO:0000820">
    <property type="term" value="P:regulation of glutamine family amino acid metabolic process"/>
    <property type="evidence" value="ECO:0007669"/>
    <property type="project" value="UniProtKB-UniRule"/>
</dbReference>
<dbReference type="CDD" id="cd05401">
    <property type="entry name" value="NT_GlnE_GlnD_like"/>
    <property type="match status" value="2"/>
</dbReference>
<dbReference type="FunFam" id="1.20.120.330:FF:000005">
    <property type="entry name" value="Bifunctional glutamine synthetase adenylyltransferase/adenylyl-removing enzyme"/>
    <property type="match status" value="1"/>
</dbReference>
<dbReference type="FunFam" id="3.30.460.10:FF:000009">
    <property type="entry name" value="Bifunctional glutamine synthetase adenylyltransferase/adenylyl-removing enzyme"/>
    <property type="match status" value="1"/>
</dbReference>
<dbReference type="Gene3D" id="1.20.120.1510">
    <property type="match status" value="1"/>
</dbReference>
<dbReference type="Gene3D" id="3.30.460.10">
    <property type="entry name" value="Beta Polymerase, domain 2"/>
    <property type="match status" value="2"/>
</dbReference>
<dbReference type="Gene3D" id="1.20.120.330">
    <property type="entry name" value="Nucleotidyltransferases domain 2"/>
    <property type="match status" value="2"/>
</dbReference>
<dbReference type="HAMAP" id="MF_00802">
    <property type="entry name" value="GlnE"/>
    <property type="match status" value="1"/>
</dbReference>
<dbReference type="InterPro" id="IPR023057">
    <property type="entry name" value="GlnE"/>
</dbReference>
<dbReference type="InterPro" id="IPR005190">
    <property type="entry name" value="GlnE_rpt_dom"/>
</dbReference>
<dbReference type="InterPro" id="IPR043519">
    <property type="entry name" value="NT_sf"/>
</dbReference>
<dbReference type="InterPro" id="IPR013546">
    <property type="entry name" value="PII_UdlTrfase/GS_AdlTrfase"/>
</dbReference>
<dbReference type="NCBIfam" id="NF008292">
    <property type="entry name" value="PRK11072.1"/>
    <property type="match status" value="1"/>
</dbReference>
<dbReference type="PANTHER" id="PTHR30621:SF0">
    <property type="entry name" value="BIFUNCTIONAL GLUTAMINE SYNTHETASE ADENYLYLTRANSFERASE_ADENYLYL-REMOVING ENZYME"/>
    <property type="match status" value="1"/>
</dbReference>
<dbReference type="PANTHER" id="PTHR30621">
    <property type="entry name" value="GLUTAMINE SYNTHETASE ADENYLYLTRANSFERASE"/>
    <property type="match status" value="1"/>
</dbReference>
<dbReference type="Pfam" id="PF08335">
    <property type="entry name" value="GlnD_UR_UTase"/>
    <property type="match status" value="2"/>
</dbReference>
<dbReference type="Pfam" id="PF03710">
    <property type="entry name" value="GlnE"/>
    <property type="match status" value="2"/>
</dbReference>
<dbReference type="SUPFAM" id="SSF81301">
    <property type="entry name" value="Nucleotidyltransferase"/>
    <property type="match status" value="2"/>
</dbReference>
<dbReference type="SUPFAM" id="SSF81593">
    <property type="entry name" value="Nucleotidyltransferase substrate binding subunit/domain"/>
    <property type="match status" value="2"/>
</dbReference>
<organism>
    <name type="scientific">Aromatoleum aromaticum (strain DSM 19018 / LMG 30748 / EbN1)</name>
    <name type="common">Azoarcus sp. (strain EbN1)</name>
    <dbReference type="NCBI Taxonomy" id="76114"/>
    <lineage>
        <taxon>Bacteria</taxon>
        <taxon>Pseudomonadati</taxon>
        <taxon>Pseudomonadota</taxon>
        <taxon>Betaproteobacteria</taxon>
        <taxon>Rhodocyclales</taxon>
        <taxon>Rhodocyclaceae</taxon>
        <taxon>Aromatoleum</taxon>
    </lineage>
</organism>
<keyword id="KW-0067">ATP-binding</keyword>
<keyword id="KW-0460">Magnesium</keyword>
<keyword id="KW-0511">Multifunctional enzyme</keyword>
<keyword id="KW-0547">Nucleotide-binding</keyword>
<keyword id="KW-0548">Nucleotidyltransferase</keyword>
<keyword id="KW-1185">Reference proteome</keyword>
<keyword id="KW-0808">Transferase</keyword>
<proteinExistence type="inferred from homology"/>
<accession>Q5P7S1</accession>
<feature type="chain" id="PRO_0000209227" description="Bifunctional glutamine synthetase adenylyltransferase/adenylyl-removing enzyme">
    <location>
        <begin position="1"/>
        <end position="938"/>
    </location>
</feature>
<feature type="region of interest" description="Adenylyl removase" evidence="1">
    <location>
        <begin position="1"/>
        <end position="457"/>
    </location>
</feature>
<feature type="region of interest" description="Adenylyl transferase" evidence="1">
    <location>
        <begin position="460"/>
        <end position="938"/>
    </location>
</feature>